<organism>
    <name type="scientific">Saccharomyces cerevisiae (strain ATCC 204508 / S288c)</name>
    <name type="common">Baker's yeast</name>
    <dbReference type="NCBI Taxonomy" id="559292"/>
    <lineage>
        <taxon>Eukaryota</taxon>
        <taxon>Fungi</taxon>
        <taxon>Dikarya</taxon>
        <taxon>Ascomycota</taxon>
        <taxon>Saccharomycotina</taxon>
        <taxon>Saccharomycetes</taxon>
        <taxon>Saccharomycetales</taxon>
        <taxon>Saccharomycetaceae</taxon>
        <taxon>Saccharomyces</taxon>
    </lineage>
</organism>
<protein>
    <recommendedName>
        <fullName>Cytochrome c oxidase subunit 2</fullName>
        <ecNumber evidence="4">7.1.1.9</ecNumber>
    </recommendedName>
    <alternativeName>
        <fullName>Cytochrome c oxidase polypeptide II</fullName>
    </alternativeName>
</protein>
<name>COX2_YEAST</name>
<proteinExistence type="evidence at protein level"/>
<accession>P00410</accession>
<accession>A0A0A7NYF9</accession>
<sequence length="251" mass="28567">MLDLLRLQLTTFIMNDVPTPYACYFQDSATPNQEGILELHDNIMFYLLVILGLVSWMLYTIVMTYSKNPIAYKYIKHGQTIEVIWTIFPAVILLIIAFPSFILLYLCDEVISPAMTIKAIGYQWYWKYEYSDFINDSGETVEFESYVIPDELLEEGQLRLLDTDTSMVVPVDTHIRFVVTAADVIHDFAIPSLGIKVDATPGRLNQVSALIQREGVFYGACSELCGTGHANMPIKIEAVSLPKFLEWLNEQ</sequence>
<gene>
    <name type="primary">COX2</name>
    <name type="synonym">OXI1</name>
    <name type="ordered locus">Q0250</name>
</gene>
<comment type="function">
    <text evidence="4 10">Component of the cytochrome c oxidase, the last enzyme in the mitochondrial electron transport chain which drives oxidative phosphorylation. The respiratory chain contains 3 multisubunit complexes succinate dehydrogenase (complex II, CII), ubiquinol-cytochrome c oxidoreductase (cytochrome b-c1 complex, complex III, CIII) and cytochrome c oxidase (complex IV, CIV), that cooperate to transfer electrons derived from NADH and succinate to molecular oxygen, creating an electrochemical gradient over the inner membrane that drives transmembrane transport and the ATP synthase. Cytochrome c oxidase is the component of the respiratory chain that catalyzes the reduction of oxygen to water. Electrons originating from reduced cytochrome c in the intermembrane space (IMS) are transferred via the dinuclear copper A center (CU(A)) of COX2 and heme A of COX1 to the active site in COX1, a binuclear center (BNC) formed by heme A3 and copper B (CU(B)). The BNC reduces molecular oxygen to 2 water molecules unsing 4 electrons from cytochrome c in the IMS and 4 protons from the mitochondrial matrix (Probable). COX2 is a catalytic core subunit which transfers the electrons from cytochrome c via its dinuclear copper A center (CU(A)) to the BNC of the COX1 (PubMed:30598554).</text>
</comment>
<comment type="catalytic activity">
    <reaction evidence="4">
        <text>4 Fe(II)-[cytochrome c] + O2 + 8 H(+)(in) = 4 Fe(III)-[cytochrome c] + 2 H2O + 4 H(+)(out)</text>
        <dbReference type="Rhea" id="RHEA:11436"/>
        <dbReference type="Rhea" id="RHEA-COMP:10350"/>
        <dbReference type="Rhea" id="RHEA-COMP:14399"/>
        <dbReference type="ChEBI" id="CHEBI:15377"/>
        <dbReference type="ChEBI" id="CHEBI:15378"/>
        <dbReference type="ChEBI" id="CHEBI:15379"/>
        <dbReference type="ChEBI" id="CHEBI:29033"/>
        <dbReference type="ChEBI" id="CHEBI:29034"/>
        <dbReference type="EC" id="7.1.1.9"/>
    </reaction>
    <physiologicalReaction direction="left-to-right" evidence="4">
        <dbReference type="Rhea" id="RHEA:11437"/>
    </physiologicalReaction>
</comment>
<comment type="cofactor">
    <cofactor evidence="4 5">
        <name>Cu cation</name>
        <dbReference type="ChEBI" id="CHEBI:23378"/>
    </cofactor>
    <text evidence="4 5">Binds a dinuclear copper A center per subunit.</text>
</comment>
<comment type="subunit">
    <text evidence="1 2 4 5 7">Component of the cytochrome c oxidase (complex IV, CIV), a multisubunit enzyme composed of 12 subunits. The complex is composed of a catalytic core of 3 subunits COX1, COX2 and COX3, encoded in the mitochondrial DNA, and 9 supernumerary subunits COX4, COX5A (or COX5B), COX6, COX7, COX8, COX9, COX12, COX13 and COX26, which are encoded in the nuclear genome (PubMed:30598554, PubMed:30598556, PubMed:7851399). The complex exists as a monomer or a dimer and forms supercomplexes (SCs) in the inner mitochondrial membrane with a dimer of ubiquinol-cytochrome c oxidoreductase (cytochrome b-c1 complex, complex III, CIII), resulting in 2 different assemblies (supercomplexes III(2)IV and III(2)IV(2)) (PubMed:10764779, PubMed:10775262, PubMed:30598554, PubMed:30598556).</text>
</comment>
<comment type="interaction">
    <interactant intactId="EBI-5024">
        <id>P00410</id>
    </interactant>
    <interactant intactId="EBI-36910">
        <id>Q04935</id>
        <label>COX20</label>
    </interactant>
    <organismsDiffer>false</organismsDiffer>
    <experiments>3</experiments>
</comment>
<comment type="subcellular location">
    <subcellularLocation>
        <location evidence="4">Mitochondrion inner membrane</location>
        <topology evidence="4">Multi-pass membrane protein</topology>
    </subcellularLocation>
</comment>
<comment type="PTM">
    <text>The N-terminal sequence of COX2 is processed by IMP1.</text>
</comment>
<comment type="similarity">
    <text evidence="9">Belongs to the cytochrome c oxidase subunit 2 family.</text>
</comment>
<evidence type="ECO:0000269" key="1">
    <source>
    </source>
</evidence>
<evidence type="ECO:0000269" key="2">
    <source>
    </source>
</evidence>
<evidence type="ECO:0000269" key="3">
    <source>
    </source>
</evidence>
<evidence type="ECO:0000269" key="4">
    <source>
    </source>
</evidence>
<evidence type="ECO:0000269" key="5">
    <source>
    </source>
</evidence>
<evidence type="ECO:0000269" key="6">
    <source>
    </source>
</evidence>
<evidence type="ECO:0000269" key="7">
    <source>
    </source>
</evidence>
<evidence type="ECO:0000269" key="8">
    <source>
    </source>
</evidence>
<evidence type="ECO:0000305" key="9"/>
<evidence type="ECO:0000305" key="10">
    <source>
    </source>
</evidence>
<evidence type="ECO:0007829" key="11">
    <source>
        <dbReference type="PDB" id="6GIQ"/>
    </source>
</evidence>
<evidence type="ECO:0007829" key="12">
    <source>
        <dbReference type="PDB" id="6T0B"/>
    </source>
</evidence>
<evidence type="ECO:0007829" key="13">
    <source>
        <dbReference type="PDB" id="8DH6"/>
    </source>
</evidence>
<evidence type="ECO:0007829" key="14">
    <source>
        <dbReference type="PDB" id="9ETZ"/>
    </source>
</evidence>
<dbReference type="EC" id="7.1.1.9" evidence="4"/>
<dbReference type="EMBL" id="K02200">
    <property type="protein sequence ID" value="AAA32158.2"/>
    <property type="molecule type" value="Genomic_DNA"/>
</dbReference>
<dbReference type="EMBL" id="V00706">
    <property type="protein sequence ID" value="CAA24078.1"/>
    <property type="molecule type" value="Genomic_DNA"/>
</dbReference>
<dbReference type="EMBL" id="V00685">
    <property type="protein sequence ID" value="CAA24056.1"/>
    <property type="molecule type" value="Genomic_DNA"/>
</dbReference>
<dbReference type="EMBL" id="KP263414">
    <property type="protein sequence ID" value="AIZ98897.1"/>
    <property type="molecule type" value="Genomic_DNA"/>
</dbReference>
<dbReference type="EMBL" id="J05007">
    <property type="protein sequence ID" value="AAA32155.2"/>
    <property type="molecule type" value="Genomic_DNA"/>
</dbReference>
<dbReference type="EMBL" id="L36888">
    <property type="protein sequence ID" value="AAA67528.1"/>
    <property type="molecule type" value="Genomic_DNA"/>
</dbReference>
<dbReference type="EMBL" id="D55725">
    <property type="protein sequence ID" value="BAA09539.1"/>
    <property type="molecule type" value="Genomic_DNA"/>
</dbReference>
<dbReference type="PIR" id="A00478">
    <property type="entry name" value="OBBY2"/>
</dbReference>
<dbReference type="RefSeq" id="NP_009326.1">
    <property type="nucleotide sequence ID" value="NC_001224.1"/>
</dbReference>
<dbReference type="PDB" id="6GIQ">
    <property type="method" value="EM"/>
    <property type="resolution" value="3.23 A"/>
    <property type="chains" value="b=1-251"/>
</dbReference>
<dbReference type="PDB" id="6HU9">
    <property type="method" value="EM"/>
    <property type="resolution" value="3.35 A"/>
    <property type="chains" value="b/n=16-251"/>
</dbReference>
<dbReference type="PDB" id="6T0B">
    <property type="method" value="EM"/>
    <property type="resolution" value="2.80 A"/>
    <property type="chains" value="b/o=16-251"/>
</dbReference>
<dbReference type="PDB" id="6T15">
    <property type="method" value="EM"/>
    <property type="resolution" value="3.29 A"/>
    <property type="chains" value="b=16-251"/>
</dbReference>
<dbReference type="PDB" id="6YMX">
    <property type="method" value="EM"/>
    <property type="resolution" value="3.17 A"/>
    <property type="chains" value="b=16-251"/>
</dbReference>
<dbReference type="PDB" id="6YMY">
    <property type="method" value="EM"/>
    <property type="resolution" value="3.41 A"/>
    <property type="chains" value="b=16-251"/>
</dbReference>
<dbReference type="PDB" id="7Z10">
    <property type="method" value="EM"/>
    <property type="resolution" value="3.87 A"/>
    <property type="chains" value="b=16-251"/>
</dbReference>
<dbReference type="PDB" id="8DH6">
    <property type="method" value="EM"/>
    <property type="resolution" value="2.94 A"/>
    <property type="chains" value="b=16-251"/>
</dbReference>
<dbReference type="PDB" id="8E7S">
    <property type="method" value="EM"/>
    <property type="resolution" value="3.20 A"/>
    <property type="chains" value="P/p=1-251"/>
</dbReference>
<dbReference type="PDB" id="8EC0">
    <property type="method" value="EM"/>
    <property type="resolution" value="3.30 A"/>
    <property type="chains" value="P=1-251"/>
</dbReference>
<dbReference type="PDB" id="9ETZ">
    <property type="method" value="EM"/>
    <property type="resolution" value="2.40 A"/>
    <property type="chains" value="b=16-251"/>
</dbReference>
<dbReference type="PDBsum" id="6GIQ"/>
<dbReference type="PDBsum" id="6HU9"/>
<dbReference type="PDBsum" id="6T0B"/>
<dbReference type="PDBsum" id="6T15"/>
<dbReference type="PDBsum" id="6YMX"/>
<dbReference type="PDBsum" id="6YMY"/>
<dbReference type="PDBsum" id="7Z10"/>
<dbReference type="PDBsum" id="8DH6"/>
<dbReference type="PDBsum" id="8E7S"/>
<dbReference type="PDBsum" id="8EC0"/>
<dbReference type="PDBsum" id="9ETZ"/>
<dbReference type="EMDB" id="EMD-10318"/>
<dbReference type="EMDB" id="EMD-10334"/>
<dbReference type="EMDB" id="EMD-10335"/>
<dbReference type="EMDB" id="EMD-10340"/>
<dbReference type="EMDB" id="EMD-10375"/>
<dbReference type="EMDB" id="EMD-10376"/>
<dbReference type="EMDB" id="EMD-10847"/>
<dbReference type="EMDB" id="EMD-10848"/>
<dbReference type="EMDB" id="EMD-14436"/>
<dbReference type="EMDB" id="EMD-19963"/>
<dbReference type="EMDB" id="EMD-27430"/>
<dbReference type="EMDB" id="EMD-27940"/>
<dbReference type="EMDB" id="EMD-28011"/>
<dbReference type="SMR" id="P00410"/>
<dbReference type="BioGRID" id="34812">
    <property type="interactions" value="96"/>
</dbReference>
<dbReference type="ComplexPortal" id="CPX-1721">
    <property type="entry name" value="Mitochondrial respiratory chain complex IV, COX5A variant"/>
</dbReference>
<dbReference type="ComplexPortal" id="CPX-1722">
    <property type="entry name" value="Mitochondrial respiratory chain complex IV, COX5B variant"/>
</dbReference>
<dbReference type="DIP" id="DIP-7592N"/>
<dbReference type="FunCoup" id="P00410">
    <property type="interactions" value="281"/>
</dbReference>
<dbReference type="IntAct" id="P00410">
    <property type="interactions" value="33"/>
</dbReference>
<dbReference type="MINT" id="P00410"/>
<dbReference type="STRING" id="4932.Q0250"/>
<dbReference type="TCDB" id="3.D.4.8.1">
    <property type="family name" value="the proton-translocating cytochrome oxidase (cox) superfamily"/>
</dbReference>
<dbReference type="GlyGen" id="P00410">
    <property type="glycosylation" value="1 site"/>
</dbReference>
<dbReference type="PaxDb" id="4932-Q0250"/>
<dbReference type="PeptideAtlas" id="P00410"/>
<dbReference type="EnsemblFungi" id="Q0250_mRNA">
    <property type="protein sequence ID" value="Q0250"/>
    <property type="gene ID" value="Q0250"/>
</dbReference>
<dbReference type="GeneID" id="854622"/>
<dbReference type="KEGG" id="sce:Q0250"/>
<dbReference type="AGR" id="SGD:S000007281"/>
<dbReference type="SGD" id="S000007281">
    <property type="gene designation" value="COX2"/>
</dbReference>
<dbReference type="VEuPathDB" id="FungiDB:Q0250"/>
<dbReference type="eggNOG" id="KOG4767">
    <property type="taxonomic scope" value="Eukaryota"/>
</dbReference>
<dbReference type="GeneTree" id="ENSGT00390000017410"/>
<dbReference type="HOGENOM" id="CLU_036876_2_3_1"/>
<dbReference type="InParanoid" id="P00410"/>
<dbReference type="OMA" id="WSYEYTD"/>
<dbReference type="OrthoDB" id="539285at2759"/>
<dbReference type="BioCyc" id="MetaCyc:Q0250-MONOMER"/>
<dbReference type="BioCyc" id="YEAST:Q0250-MONOMER"/>
<dbReference type="PRO" id="PR:P00410"/>
<dbReference type="Proteomes" id="UP000002311">
    <property type="component" value="Mitochondrion"/>
</dbReference>
<dbReference type="RNAct" id="P00410">
    <property type="molecule type" value="protein"/>
</dbReference>
<dbReference type="GO" id="GO:0005743">
    <property type="term" value="C:mitochondrial inner membrane"/>
    <property type="evidence" value="ECO:0000304"/>
    <property type="project" value="Reactome"/>
</dbReference>
<dbReference type="GO" id="GO:0005739">
    <property type="term" value="C:mitochondrion"/>
    <property type="evidence" value="ECO:0007005"/>
    <property type="project" value="SGD"/>
</dbReference>
<dbReference type="GO" id="GO:0045277">
    <property type="term" value="C:respiratory chain complex IV"/>
    <property type="evidence" value="ECO:0000314"/>
    <property type="project" value="SGD"/>
</dbReference>
<dbReference type="GO" id="GO:0005507">
    <property type="term" value="F:copper ion binding"/>
    <property type="evidence" value="ECO:0007669"/>
    <property type="project" value="InterPro"/>
</dbReference>
<dbReference type="GO" id="GO:0004129">
    <property type="term" value="F:cytochrome-c oxidase activity"/>
    <property type="evidence" value="ECO:0007669"/>
    <property type="project" value="UniProtKB-EC"/>
</dbReference>
<dbReference type="GO" id="GO:0009060">
    <property type="term" value="P:aerobic respiration"/>
    <property type="evidence" value="ECO:0000315"/>
    <property type="project" value="SGD"/>
</dbReference>
<dbReference type="GO" id="GO:0042773">
    <property type="term" value="P:ATP synthesis coupled electron transport"/>
    <property type="evidence" value="ECO:0000318"/>
    <property type="project" value="GO_Central"/>
</dbReference>
<dbReference type="GO" id="GO:0006123">
    <property type="term" value="P:mitochondrial electron transport, cytochrome c to oxygen"/>
    <property type="evidence" value="ECO:0000314"/>
    <property type="project" value="SGD"/>
</dbReference>
<dbReference type="CDD" id="cd13912">
    <property type="entry name" value="CcO_II_C"/>
    <property type="match status" value="1"/>
</dbReference>
<dbReference type="FunFam" id="1.10.287.90:FF:000004">
    <property type="entry name" value="Cytochrome c oxidase subunit 2"/>
    <property type="match status" value="1"/>
</dbReference>
<dbReference type="FunFam" id="2.60.40.420:FF:000001">
    <property type="entry name" value="Cytochrome c oxidase subunit 2"/>
    <property type="match status" value="1"/>
</dbReference>
<dbReference type="Gene3D" id="1.10.287.90">
    <property type="match status" value="1"/>
</dbReference>
<dbReference type="Gene3D" id="2.60.40.420">
    <property type="entry name" value="Cupredoxins - blue copper proteins"/>
    <property type="match status" value="1"/>
</dbReference>
<dbReference type="InterPro" id="IPR045187">
    <property type="entry name" value="CcO_II"/>
</dbReference>
<dbReference type="InterPro" id="IPR002429">
    <property type="entry name" value="CcO_II-like_C"/>
</dbReference>
<dbReference type="InterPro" id="IPR034210">
    <property type="entry name" value="CcO_II_C"/>
</dbReference>
<dbReference type="InterPro" id="IPR001505">
    <property type="entry name" value="Copper_CuA"/>
</dbReference>
<dbReference type="InterPro" id="IPR008972">
    <property type="entry name" value="Cupredoxin"/>
</dbReference>
<dbReference type="InterPro" id="IPR014222">
    <property type="entry name" value="Cyt_c_oxidase_su2"/>
</dbReference>
<dbReference type="InterPro" id="IPR011759">
    <property type="entry name" value="Cyt_c_oxidase_su2_TM_dom"/>
</dbReference>
<dbReference type="InterPro" id="IPR036257">
    <property type="entry name" value="Cyt_c_oxidase_su2_TM_sf"/>
</dbReference>
<dbReference type="NCBIfam" id="TIGR02866">
    <property type="entry name" value="CoxB"/>
    <property type="match status" value="1"/>
</dbReference>
<dbReference type="PANTHER" id="PTHR22888:SF9">
    <property type="entry name" value="CYTOCHROME C OXIDASE SUBUNIT 2"/>
    <property type="match status" value="1"/>
</dbReference>
<dbReference type="PANTHER" id="PTHR22888">
    <property type="entry name" value="CYTOCHROME C OXIDASE, SUBUNIT II"/>
    <property type="match status" value="1"/>
</dbReference>
<dbReference type="Pfam" id="PF00116">
    <property type="entry name" value="COX2"/>
    <property type="match status" value="1"/>
</dbReference>
<dbReference type="Pfam" id="PF02790">
    <property type="entry name" value="COX2_TM"/>
    <property type="match status" value="1"/>
</dbReference>
<dbReference type="PRINTS" id="PR01166">
    <property type="entry name" value="CYCOXIDASEII"/>
</dbReference>
<dbReference type="SUPFAM" id="SSF49503">
    <property type="entry name" value="Cupredoxins"/>
    <property type="match status" value="1"/>
</dbReference>
<dbReference type="SUPFAM" id="SSF81464">
    <property type="entry name" value="Cytochrome c oxidase subunit II-like, transmembrane region"/>
    <property type="match status" value="1"/>
</dbReference>
<dbReference type="PROSITE" id="PS00078">
    <property type="entry name" value="COX2"/>
    <property type="match status" value="1"/>
</dbReference>
<dbReference type="PROSITE" id="PS50857">
    <property type="entry name" value="COX2_CUA"/>
    <property type="match status" value="1"/>
</dbReference>
<dbReference type="PROSITE" id="PS50999">
    <property type="entry name" value="COX2_TM"/>
    <property type="match status" value="1"/>
</dbReference>
<reference key="1">
    <citation type="journal article" date="1979" name="J. Biol. Chem.">
        <title>Assembly of the mitochondrial membrane system. DNA sequence of subunit 2 of yeast cytochrome oxidase.</title>
        <authorList>
            <person name="Coruzzi G."/>
            <person name="Tzagoloff A."/>
        </authorList>
    </citation>
    <scope>NUCLEOTIDE SEQUENCE [GENOMIC DNA]</scope>
    <source>
        <strain>DS200/A1</strain>
    </source>
</reference>
<reference key="2">
    <citation type="journal article" date="1979" name="Proc. Natl. Acad. Sci. U.S.A.">
        <title>Five TGA 'stop' codons occur within the translated sequence of the yeast mitochondrial gene for cytochrome c oxidase subunit II.</title>
        <authorList>
            <person name="Fox T.D."/>
        </authorList>
    </citation>
    <scope>NUCLEOTIDE SEQUENCE [GENOMIC DNA]</scope>
    <source>
        <strain>ATCC 24657 / D273-10B</strain>
    </source>
</reference>
<reference key="3">
    <citation type="journal article" date="1998" name="FEBS Lett.">
        <title>The complete sequence of the mitochondrial genome of Saccharomyces cerevisiae.</title>
        <authorList>
            <person name="Foury F."/>
            <person name="Roganti T."/>
            <person name="Lecrenier N."/>
            <person name="Purnelle B."/>
        </authorList>
    </citation>
    <scope>NUCLEOTIDE SEQUENCE [LARGE SCALE GENOMIC DNA]</scope>
    <source>
        <strain>ATCC 96604 / S288c / FY1679</strain>
    </source>
</reference>
<reference key="4">
    <citation type="journal article" date="2014" name="G3 (Bethesda)">
        <title>The reference genome sequence of Saccharomyces cerevisiae: Then and now.</title>
        <authorList>
            <person name="Engel S.R."/>
            <person name="Dietrich F.S."/>
            <person name="Fisk D.G."/>
            <person name="Binkley G."/>
            <person name="Balakrishnan R."/>
            <person name="Costanzo M.C."/>
            <person name="Dwight S.S."/>
            <person name="Hitz B.C."/>
            <person name="Karra K."/>
            <person name="Nash R.S."/>
            <person name="Weng S."/>
            <person name="Wong E.D."/>
            <person name="Lloyd P."/>
            <person name="Skrzypek M.S."/>
            <person name="Miyasato S.R."/>
            <person name="Simison M."/>
            <person name="Cherry J.M."/>
        </authorList>
    </citation>
    <scope>GENOME REANNOTATION</scope>
    <source>
        <strain>ATCC 96604 / S288c / FY1679</strain>
    </source>
</reference>
<reference key="5">
    <citation type="journal article" date="1989" name="J. Biol. Chem.">
        <title>Isolation and characterization of a yeast strain carrying a mutation in the mitochondrial promoter for COX2.</title>
        <authorList>
            <person name="Cameron V.L."/>
            <person name="Fox T.D."/>
            <person name="Poyton R.O."/>
        </authorList>
    </citation>
    <scope>NUCLEOTIDE SEQUENCE [GENOMIC DNA] OF 1-117</scope>
</reference>
<reference key="6">
    <citation type="journal article" date="1979" name="Proc. Natl. Acad. Sci. U.S.A.">
        <title>Use of the UGA terminator as a tryptophan codon in yeast mitochondria.</title>
        <authorList>
            <person name="Macino G."/>
            <person name="Coruzzi G."/>
            <person name="Nobrega F.G."/>
            <person name="Li M."/>
            <person name="Tzagoloff A."/>
        </authorList>
    </citation>
    <scope>NUCLEOTIDE SEQUENCE [GENOMIC DNA] OF 121-132</scope>
</reference>
<reference key="7">
    <citation type="submission" date="1995-06" db="EMBL/GenBank/DDBJ databases">
        <authorList>
            <person name="Nakagawa Y."/>
        </authorList>
    </citation>
    <scope>NUCLEOTIDE SEQUENCE [GENOMIC DNA] OF 46-200</scope>
    <source>
        <strain>ATCC 18824 / CBS 1171 / DSM 70449 / IFO 10217 / NRRL Y-12632</strain>
    </source>
</reference>
<reference key="8">
    <citation type="journal article" date="1992" name="J. Biol. Chem.">
        <title>Purification of yeast cytochrome c oxidase with a subunit composition resembling the mammalian enzyme.</title>
        <authorList>
            <person name="Taanman J.-W."/>
            <person name="Capaldi R.A."/>
        </authorList>
    </citation>
    <scope>PROTEIN SEQUENCE OF 16-34</scope>
    <scope>COMPOSITION OF THE CYTOCHROME C OXIDASE COMPLEX</scope>
</reference>
<reference key="9">
    <citation type="journal article" date="1995" name="Eur. J. Biochem.">
        <title>Kinetic properties and ligand binding of the eleven-subunit cytochrome-c oxidase from Saccharomyces cerevisiae isolated with a novel large-scale purification method.</title>
        <authorList>
            <person name="Geier B.M."/>
            <person name="Schagger H."/>
            <person name="Ortwein C."/>
            <person name="Link T.A."/>
            <person name="Hagen W.R."/>
            <person name="Brandt U."/>
            <person name="Von Jagow G."/>
        </authorList>
    </citation>
    <scope>PROTEIN SEQUENCE OF 16-18</scope>
    <scope>COMPOSITION OF THE CYTOCHROME C OXIDASE COMPLEX</scope>
</reference>
<reference key="10">
    <citation type="journal article" date="1983" name="EMBO J.">
        <title>A nuclear mutation prevents processing of a mitochondrially encoded membrane protein in Saccharomyces cerevisiae.</title>
        <authorList>
            <person name="Pratje E."/>
            <person name="Mannhaupt G."/>
            <person name="Michaelis G."/>
            <person name="Beyreuther K."/>
        </authorList>
    </citation>
    <scope>POST-TRANSLATIONAL CLEAVAGE</scope>
</reference>
<reference key="11">
    <citation type="journal article" date="1996" name="Mol. Gen. Genet.">
        <title>SOM1, a small new gene required for mitochondrial inner membrane peptidase function in Saccharomyces cerevisiae.</title>
        <authorList>
            <person name="Esser K."/>
            <person name="Pratje E."/>
            <person name="Michaelis G."/>
        </authorList>
    </citation>
    <scope>POST-TRANSLATIONAL CLEAVAGE BY IMP1</scope>
</reference>
<reference key="12">
    <citation type="journal article" date="2000" name="EMBO J.">
        <title>Supercomplexes in the respiratory chains of yeast and mammalian mitochondria.</title>
        <authorList>
            <person name="Schaegger H."/>
            <person name="Pfeiffer K."/>
        </authorList>
    </citation>
    <scope>FORMATION OF CYTOCHROME BC1-CYTOCHROME C OXIDASE SUPERCOMPLEX</scope>
</reference>
<reference key="13">
    <citation type="journal article" date="2000" name="J. Biol. Chem.">
        <title>The cytochrome bc1 and cytochrome c oxidase complexes associate to form a single supracomplex in yeast mitochondria.</title>
        <authorList>
            <person name="Cruciat C.M."/>
            <person name="Brunner S."/>
            <person name="Baumann F."/>
            <person name="Neupert W."/>
            <person name="Stuart R.A."/>
        </authorList>
    </citation>
    <scope>FORMATION OF CYTOCHROME BC1-CYTOCHROME C OXIDASE SUPERCOMPLEX</scope>
</reference>
<reference key="14">
    <citation type="journal article" date="2019" name="Nat. Struct. Mol. Biol.">
        <title>Cryo-EM structure of the yeast respiratory supercomplex.</title>
        <authorList>
            <person name="Rathore S."/>
            <person name="Berndtsson J."/>
            <person name="Marin-Buera L."/>
            <person name="Conrad J."/>
            <person name="Carroni M."/>
            <person name="Brzezinski P."/>
            <person name="Ott M."/>
        </authorList>
    </citation>
    <scope>STRUCTURE BY ELECTRON MICROSCOPY (3.23 ANGSTROMS) IN COMPLEX WITH COPPER</scope>
</reference>
<reference key="15">
    <citation type="journal article" date="2019" name="Nat. Struct. Mol. Biol.">
        <title>Structure of yeast cytochrome c oxidase in a supercomplex with cytochrome bc1.</title>
        <authorList>
            <person name="Hartley A.M."/>
            <person name="Lukoyanova N."/>
            <person name="Zhang Y."/>
            <person name="Cabrera-Orefice A."/>
            <person name="Arnold S."/>
            <person name="Meunier B."/>
            <person name="Pinotsis N."/>
            <person name="Marechal A."/>
        </authorList>
    </citation>
    <scope>STRUCTURE BY ELECTRON MICROSCOPY (3.35 ANGSTROMS) IN COMPLEX WITH COPPER AND MAGNESIUM</scope>
    <scope>FUNCTION</scope>
    <scope>CATALYTIC ACTIVITY</scope>
</reference>
<keyword id="KW-0002">3D-structure</keyword>
<keyword id="KW-0186">Copper</keyword>
<keyword id="KW-0903">Direct protein sequencing</keyword>
<keyword id="KW-0249">Electron transport</keyword>
<keyword id="KW-0472">Membrane</keyword>
<keyword id="KW-0479">Metal-binding</keyword>
<keyword id="KW-0496">Mitochondrion</keyword>
<keyword id="KW-0999">Mitochondrion inner membrane</keyword>
<keyword id="KW-1185">Reference proteome</keyword>
<keyword id="KW-0679">Respiratory chain</keyword>
<keyword id="KW-1278">Translocase</keyword>
<keyword id="KW-0812">Transmembrane</keyword>
<keyword id="KW-1133">Transmembrane helix</keyword>
<keyword id="KW-0813">Transport</keyword>
<geneLocation type="mitochondrion"/>
<feature type="propeptide" id="PRO_0000419180" description="Removed in mature form" evidence="3 6 7 8">
    <location>
        <begin position="1"/>
        <end position="15"/>
    </location>
</feature>
<feature type="chain" id="PRO_0000006048" description="Cytochrome c oxidase subunit 2">
    <location>
        <begin position="16"/>
        <end position="251"/>
    </location>
</feature>
<feature type="topological domain" description="Mitochondrial intermembrane" evidence="4">
    <location>
        <begin position="16"/>
        <end position="30"/>
    </location>
</feature>
<feature type="transmembrane region" description="Helical; Name=1" evidence="4">
    <location>
        <begin position="31"/>
        <end position="64"/>
    </location>
</feature>
<feature type="topological domain" description="Mitochondrial matrix" evidence="4">
    <location>
        <begin position="65"/>
        <end position="78"/>
    </location>
</feature>
<feature type="transmembrane region" description="Helical; Name=2" evidence="4">
    <location>
        <begin position="79"/>
        <end position="108"/>
    </location>
</feature>
<feature type="topological domain" description="Mitochondrial intermembrane" evidence="4">
    <location>
        <begin position="109"/>
        <end position="251"/>
    </location>
</feature>
<feature type="binding site" evidence="4">
    <location>
        <position position="186"/>
    </location>
    <ligand>
        <name>Cu cation</name>
        <dbReference type="ChEBI" id="CHEBI:23378"/>
        <label>A1</label>
    </ligand>
</feature>
<feature type="binding site" evidence="4">
    <location>
        <position position="221"/>
    </location>
    <ligand>
        <name>Cu cation</name>
        <dbReference type="ChEBI" id="CHEBI:23378"/>
        <label>A1</label>
    </ligand>
</feature>
<feature type="binding site" evidence="4">
    <location>
        <position position="221"/>
    </location>
    <ligand>
        <name>Cu cation</name>
        <dbReference type="ChEBI" id="CHEBI:23378"/>
        <label>A2</label>
    </ligand>
</feature>
<feature type="binding site" evidence="4">
    <location>
        <position position="223"/>
    </location>
    <ligand>
        <name>Cu cation</name>
        <dbReference type="ChEBI" id="CHEBI:23378"/>
        <label>A2</label>
    </ligand>
</feature>
<feature type="binding site" evidence="4 5">
    <location>
        <position position="223"/>
    </location>
    <ligand>
        <name>Mg(2+)</name>
        <dbReference type="ChEBI" id="CHEBI:18420"/>
        <note>ligand shared with COX1</note>
    </ligand>
</feature>
<feature type="binding site" evidence="4">
    <location>
        <position position="225"/>
    </location>
    <ligand>
        <name>Cu cation</name>
        <dbReference type="ChEBI" id="CHEBI:23378"/>
        <label>A1</label>
    </ligand>
</feature>
<feature type="binding site" evidence="4">
    <location>
        <position position="225"/>
    </location>
    <ligand>
        <name>Cu cation</name>
        <dbReference type="ChEBI" id="CHEBI:23378"/>
        <label>A2</label>
    </ligand>
</feature>
<feature type="binding site" evidence="4 5">
    <location>
        <position position="229"/>
    </location>
    <ligand>
        <name>Cu cation</name>
        <dbReference type="ChEBI" id="CHEBI:23378"/>
        <label>A2</label>
    </ligand>
</feature>
<feature type="binding site" evidence="4">
    <location>
        <position position="232"/>
    </location>
    <ligand>
        <name>Cu cation</name>
        <dbReference type="ChEBI" id="CHEBI:23378"/>
        <label>A1</label>
    </ligand>
</feature>
<feature type="site" description="Cleavage; by IMP1" evidence="8">
    <location>
        <begin position="15"/>
        <end position="16"/>
    </location>
</feature>
<feature type="sequence conflict" description="In Ref. 5; AAA32155." evidence="9" ref="5">
    <original>Y</original>
    <variation>N</variation>
    <location>
        <position position="59"/>
    </location>
</feature>
<feature type="helix" evidence="14">
    <location>
        <begin position="31"/>
        <end position="65"/>
    </location>
</feature>
<feature type="helix" evidence="14">
    <location>
        <begin position="79"/>
        <end position="108"/>
    </location>
</feature>
<feature type="strand" evidence="14">
    <location>
        <begin position="114"/>
        <end position="122"/>
    </location>
</feature>
<feature type="strand" evidence="14">
    <location>
        <begin position="125"/>
        <end position="130"/>
    </location>
</feature>
<feature type="strand" evidence="12">
    <location>
        <begin position="136"/>
        <end position="140"/>
    </location>
</feature>
<feature type="strand" evidence="14">
    <location>
        <begin position="141"/>
        <end position="145"/>
    </location>
</feature>
<feature type="helix" evidence="14">
    <location>
        <begin position="150"/>
        <end position="152"/>
    </location>
</feature>
<feature type="strand" evidence="11">
    <location>
        <begin position="155"/>
        <end position="157"/>
    </location>
</feature>
<feature type="turn" evidence="14">
    <location>
        <begin position="159"/>
        <end position="161"/>
    </location>
</feature>
<feature type="strand" evidence="14">
    <location>
        <begin position="163"/>
        <end position="165"/>
    </location>
</feature>
<feature type="strand" evidence="14">
    <location>
        <begin position="167"/>
        <end position="172"/>
    </location>
</feature>
<feature type="strand" evidence="14">
    <location>
        <begin position="174"/>
        <end position="184"/>
    </location>
</feature>
<feature type="strand" evidence="14">
    <location>
        <begin position="186"/>
        <end position="190"/>
    </location>
</feature>
<feature type="helix" evidence="14">
    <location>
        <begin position="191"/>
        <end position="193"/>
    </location>
</feature>
<feature type="strand" evidence="14">
    <location>
        <begin position="195"/>
        <end position="199"/>
    </location>
</feature>
<feature type="strand" evidence="13">
    <location>
        <begin position="201"/>
        <end position="203"/>
    </location>
</feature>
<feature type="strand" evidence="14">
    <location>
        <begin position="205"/>
        <end position="210"/>
    </location>
</feature>
<feature type="strand" evidence="14">
    <location>
        <begin position="215"/>
        <end position="219"/>
    </location>
</feature>
<feature type="helix" evidence="14">
    <location>
        <begin position="227"/>
        <end position="230"/>
    </location>
</feature>
<feature type="strand" evidence="14">
    <location>
        <begin position="234"/>
        <end position="239"/>
    </location>
</feature>
<feature type="helix" evidence="14">
    <location>
        <begin position="241"/>
        <end position="250"/>
    </location>
</feature>